<sequence length="243" mass="25194">MGPREPFVVFPAIDLKGGRCVRLRQGDFGRERVYDADPVGRAREWERRGARALHVVDLDGAREGRPVQLALIREIARAAGVPLQVGGGIRTLEDVRAARRAGAARVVVGTAAVADRDFRLRALEELGADLVVAVDAREGVVATHGWQRQSGVGAAELAGELAAEGVRAVLFTDISRDGTGEGAALERTAEVAGIIPTIASGGVRGAGDIRALARTPGVVGAVVGTALYEGQATLEELLAAAGG</sequence>
<gene>
    <name evidence="1" type="primary">hisA</name>
    <name type="ordered locus">Rxyl_1105</name>
</gene>
<keyword id="KW-0028">Amino-acid biosynthesis</keyword>
<keyword id="KW-0963">Cytoplasm</keyword>
<keyword id="KW-0368">Histidine biosynthesis</keyword>
<keyword id="KW-0413">Isomerase</keyword>
<keyword id="KW-1185">Reference proteome</keyword>
<feature type="chain" id="PRO_0000290529" description="1-(5-phosphoribosyl)-5-[(5-phosphoribosylamino)methylideneamino] imidazole-4-carboxamide isomerase">
    <location>
        <begin position="1"/>
        <end position="243"/>
    </location>
</feature>
<feature type="active site" description="Proton acceptor" evidence="1">
    <location>
        <position position="14"/>
    </location>
</feature>
<feature type="active site" description="Proton donor" evidence="1">
    <location>
        <position position="135"/>
    </location>
</feature>
<name>HIS4_RUBXD</name>
<proteinExistence type="inferred from homology"/>
<comment type="catalytic activity">
    <reaction evidence="1">
        <text>1-(5-phospho-beta-D-ribosyl)-5-[(5-phospho-beta-D-ribosylamino)methylideneamino]imidazole-4-carboxamide = 5-[(5-phospho-1-deoxy-D-ribulos-1-ylimino)methylamino]-1-(5-phospho-beta-D-ribosyl)imidazole-4-carboxamide</text>
        <dbReference type="Rhea" id="RHEA:15469"/>
        <dbReference type="ChEBI" id="CHEBI:58435"/>
        <dbReference type="ChEBI" id="CHEBI:58525"/>
        <dbReference type="EC" id="5.3.1.16"/>
    </reaction>
</comment>
<comment type="pathway">
    <text evidence="1">Amino-acid biosynthesis; L-histidine biosynthesis; L-histidine from 5-phospho-alpha-D-ribose 1-diphosphate: step 4/9.</text>
</comment>
<comment type="subcellular location">
    <subcellularLocation>
        <location evidence="1">Cytoplasm</location>
    </subcellularLocation>
</comment>
<comment type="similarity">
    <text evidence="1">Belongs to the HisA/HisF family.</text>
</comment>
<reference key="1">
    <citation type="submission" date="2006-06" db="EMBL/GenBank/DDBJ databases">
        <title>Complete sequence of Rubrobacter xylanophilus DSM 9941.</title>
        <authorList>
            <consortium name="US DOE Joint Genome Institute"/>
            <person name="Copeland A."/>
            <person name="Lucas S."/>
            <person name="Lapidus A."/>
            <person name="Barry K."/>
            <person name="Detter J.C."/>
            <person name="Glavina del Rio T."/>
            <person name="Hammon N."/>
            <person name="Israni S."/>
            <person name="Dalin E."/>
            <person name="Tice H."/>
            <person name="Pitluck S."/>
            <person name="Munk A.C."/>
            <person name="Brettin T."/>
            <person name="Bruce D."/>
            <person name="Han C."/>
            <person name="Tapia R."/>
            <person name="Gilna P."/>
            <person name="Schmutz J."/>
            <person name="Larimer F."/>
            <person name="Land M."/>
            <person name="Hauser L."/>
            <person name="Kyrpides N."/>
            <person name="Lykidis A."/>
            <person name="da Costa M.S."/>
            <person name="Rainey F.A."/>
            <person name="Empadinhas N."/>
            <person name="Jolivet E."/>
            <person name="Battista J.R."/>
            <person name="Richardson P."/>
        </authorList>
    </citation>
    <scope>NUCLEOTIDE SEQUENCE [LARGE SCALE GENOMIC DNA]</scope>
    <source>
        <strain>DSM 9941 / JCM 11954 / NBRC 16129 / PRD-1</strain>
    </source>
</reference>
<accession>Q1AX07</accession>
<dbReference type="EC" id="5.3.1.16" evidence="1"/>
<dbReference type="EMBL" id="CP000386">
    <property type="protein sequence ID" value="ABG04071.1"/>
    <property type="molecule type" value="Genomic_DNA"/>
</dbReference>
<dbReference type="RefSeq" id="WP_011564089.1">
    <property type="nucleotide sequence ID" value="NC_008148.1"/>
</dbReference>
<dbReference type="SMR" id="Q1AX07"/>
<dbReference type="STRING" id="266117.Rxyl_1105"/>
<dbReference type="KEGG" id="rxy:Rxyl_1105"/>
<dbReference type="eggNOG" id="COG0106">
    <property type="taxonomic scope" value="Bacteria"/>
</dbReference>
<dbReference type="HOGENOM" id="CLU_048577_1_1_11"/>
<dbReference type="OrthoDB" id="9807749at2"/>
<dbReference type="PhylomeDB" id="Q1AX07"/>
<dbReference type="UniPathway" id="UPA00031">
    <property type="reaction ID" value="UER00009"/>
</dbReference>
<dbReference type="Proteomes" id="UP000006637">
    <property type="component" value="Chromosome"/>
</dbReference>
<dbReference type="GO" id="GO:0005737">
    <property type="term" value="C:cytoplasm"/>
    <property type="evidence" value="ECO:0007669"/>
    <property type="project" value="UniProtKB-SubCell"/>
</dbReference>
<dbReference type="GO" id="GO:0003949">
    <property type="term" value="F:1-(5-phosphoribosyl)-5-[(5-phosphoribosylamino)methylideneamino]imidazole-4-carboxamide isomerase activity"/>
    <property type="evidence" value="ECO:0007669"/>
    <property type="project" value="UniProtKB-UniRule"/>
</dbReference>
<dbReference type="GO" id="GO:0000105">
    <property type="term" value="P:L-histidine biosynthetic process"/>
    <property type="evidence" value="ECO:0007669"/>
    <property type="project" value="UniProtKB-UniRule"/>
</dbReference>
<dbReference type="GO" id="GO:0000162">
    <property type="term" value="P:L-tryptophan biosynthetic process"/>
    <property type="evidence" value="ECO:0007669"/>
    <property type="project" value="TreeGrafter"/>
</dbReference>
<dbReference type="CDD" id="cd04732">
    <property type="entry name" value="HisA"/>
    <property type="match status" value="1"/>
</dbReference>
<dbReference type="FunFam" id="3.20.20.70:FF:000009">
    <property type="entry name" value="1-(5-phosphoribosyl)-5-[(5-phosphoribosylamino)methylideneamino] imidazole-4-carboxamide isomerase"/>
    <property type="match status" value="1"/>
</dbReference>
<dbReference type="Gene3D" id="3.20.20.70">
    <property type="entry name" value="Aldolase class I"/>
    <property type="match status" value="1"/>
</dbReference>
<dbReference type="HAMAP" id="MF_01014">
    <property type="entry name" value="HisA"/>
    <property type="match status" value="1"/>
</dbReference>
<dbReference type="InterPro" id="IPR013785">
    <property type="entry name" value="Aldolase_TIM"/>
</dbReference>
<dbReference type="InterPro" id="IPR006062">
    <property type="entry name" value="His_biosynth"/>
</dbReference>
<dbReference type="InterPro" id="IPR006063">
    <property type="entry name" value="HisA_bact_arch"/>
</dbReference>
<dbReference type="InterPro" id="IPR044524">
    <property type="entry name" value="Isoase_HisA-like"/>
</dbReference>
<dbReference type="InterPro" id="IPR023016">
    <property type="entry name" value="Isoase_HisA-like_bact"/>
</dbReference>
<dbReference type="InterPro" id="IPR011060">
    <property type="entry name" value="RibuloseP-bd_barrel"/>
</dbReference>
<dbReference type="NCBIfam" id="TIGR00007">
    <property type="entry name" value="1-(5-phosphoribosyl)-5-[(5-phosphoribosylamino)methylideneamino]imidazole-4-carboxamide isomerase"/>
    <property type="match status" value="1"/>
</dbReference>
<dbReference type="PANTHER" id="PTHR43090">
    <property type="entry name" value="1-(5-PHOSPHORIBOSYL)-5-[(5-PHOSPHORIBOSYLAMINO)METHYLIDENEAMINO] IMIDAZOLE-4-CARBOXAMIDE ISOMERASE"/>
    <property type="match status" value="1"/>
</dbReference>
<dbReference type="PANTHER" id="PTHR43090:SF2">
    <property type="entry name" value="1-(5-PHOSPHORIBOSYL)-5-[(5-PHOSPHORIBOSYLAMINO)METHYLIDENEAMINO] IMIDAZOLE-4-CARBOXAMIDE ISOMERASE"/>
    <property type="match status" value="1"/>
</dbReference>
<dbReference type="Pfam" id="PF00977">
    <property type="entry name" value="His_biosynth"/>
    <property type="match status" value="1"/>
</dbReference>
<dbReference type="SUPFAM" id="SSF51366">
    <property type="entry name" value="Ribulose-phoshate binding barrel"/>
    <property type="match status" value="1"/>
</dbReference>
<evidence type="ECO:0000255" key="1">
    <source>
        <dbReference type="HAMAP-Rule" id="MF_01014"/>
    </source>
</evidence>
<organism>
    <name type="scientific">Rubrobacter xylanophilus (strain DSM 9941 / JCM 11954 / NBRC 16129 / PRD-1)</name>
    <dbReference type="NCBI Taxonomy" id="266117"/>
    <lineage>
        <taxon>Bacteria</taxon>
        <taxon>Bacillati</taxon>
        <taxon>Actinomycetota</taxon>
        <taxon>Rubrobacteria</taxon>
        <taxon>Rubrobacterales</taxon>
        <taxon>Rubrobacteraceae</taxon>
        <taxon>Rubrobacter</taxon>
    </lineage>
</organism>
<protein>
    <recommendedName>
        <fullName evidence="1">1-(5-phosphoribosyl)-5-[(5-phosphoribosylamino)methylideneamino] imidazole-4-carboxamide isomerase</fullName>
        <ecNumber evidence="1">5.3.1.16</ecNumber>
    </recommendedName>
    <alternativeName>
        <fullName evidence="1">Phosphoribosylformimino-5-aminoimidazole carboxamide ribotide isomerase</fullName>
    </alternativeName>
</protein>